<dbReference type="EC" id="3.5.2.7" evidence="1"/>
<dbReference type="EMBL" id="CU633749">
    <property type="protein sequence ID" value="CAQ70421.1"/>
    <property type="molecule type" value="Genomic_DNA"/>
</dbReference>
<dbReference type="RefSeq" id="WP_012353721.1">
    <property type="nucleotide sequence ID" value="NC_010528.1"/>
</dbReference>
<dbReference type="SMR" id="B3R6A3"/>
<dbReference type="GeneID" id="29762024"/>
<dbReference type="KEGG" id="cti:RALTA_A2489"/>
<dbReference type="eggNOG" id="COG1228">
    <property type="taxonomic scope" value="Bacteria"/>
</dbReference>
<dbReference type="HOGENOM" id="CLU_041647_0_0_4"/>
<dbReference type="BioCyc" id="CTAI977880:RALTA_RS12100-MONOMER"/>
<dbReference type="UniPathway" id="UPA00379">
    <property type="reaction ID" value="UER00551"/>
</dbReference>
<dbReference type="Proteomes" id="UP000001692">
    <property type="component" value="Chromosome 1"/>
</dbReference>
<dbReference type="GO" id="GO:0005737">
    <property type="term" value="C:cytoplasm"/>
    <property type="evidence" value="ECO:0007669"/>
    <property type="project" value="UniProtKB-SubCell"/>
</dbReference>
<dbReference type="GO" id="GO:0050480">
    <property type="term" value="F:imidazolonepropionase activity"/>
    <property type="evidence" value="ECO:0007669"/>
    <property type="project" value="UniProtKB-UniRule"/>
</dbReference>
<dbReference type="GO" id="GO:0005506">
    <property type="term" value="F:iron ion binding"/>
    <property type="evidence" value="ECO:0007669"/>
    <property type="project" value="UniProtKB-UniRule"/>
</dbReference>
<dbReference type="GO" id="GO:0008270">
    <property type="term" value="F:zinc ion binding"/>
    <property type="evidence" value="ECO:0007669"/>
    <property type="project" value="UniProtKB-UniRule"/>
</dbReference>
<dbReference type="GO" id="GO:0019556">
    <property type="term" value="P:L-histidine catabolic process to glutamate and formamide"/>
    <property type="evidence" value="ECO:0007669"/>
    <property type="project" value="UniProtKB-UniPathway"/>
</dbReference>
<dbReference type="GO" id="GO:0019557">
    <property type="term" value="P:L-histidine catabolic process to glutamate and formate"/>
    <property type="evidence" value="ECO:0007669"/>
    <property type="project" value="UniProtKB-UniPathway"/>
</dbReference>
<dbReference type="CDD" id="cd01296">
    <property type="entry name" value="Imidazolone-5PH"/>
    <property type="match status" value="1"/>
</dbReference>
<dbReference type="FunFam" id="3.20.20.140:FF:000007">
    <property type="entry name" value="Imidazolonepropionase"/>
    <property type="match status" value="1"/>
</dbReference>
<dbReference type="Gene3D" id="3.20.20.140">
    <property type="entry name" value="Metal-dependent hydrolases"/>
    <property type="match status" value="1"/>
</dbReference>
<dbReference type="Gene3D" id="2.30.40.10">
    <property type="entry name" value="Urease, subunit C, domain 1"/>
    <property type="match status" value="1"/>
</dbReference>
<dbReference type="HAMAP" id="MF_00372">
    <property type="entry name" value="HutI"/>
    <property type="match status" value="1"/>
</dbReference>
<dbReference type="InterPro" id="IPR006680">
    <property type="entry name" value="Amidohydro-rel"/>
</dbReference>
<dbReference type="InterPro" id="IPR005920">
    <property type="entry name" value="HutI"/>
</dbReference>
<dbReference type="InterPro" id="IPR011059">
    <property type="entry name" value="Metal-dep_hydrolase_composite"/>
</dbReference>
<dbReference type="InterPro" id="IPR032466">
    <property type="entry name" value="Metal_Hydrolase"/>
</dbReference>
<dbReference type="NCBIfam" id="TIGR01224">
    <property type="entry name" value="hutI"/>
    <property type="match status" value="1"/>
</dbReference>
<dbReference type="PANTHER" id="PTHR42752">
    <property type="entry name" value="IMIDAZOLONEPROPIONASE"/>
    <property type="match status" value="1"/>
</dbReference>
<dbReference type="PANTHER" id="PTHR42752:SF1">
    <property type="entry name" value="IMIDAZOLONEPROPIONASE-RELATED"/>
    <property type="match status" value="1"/>
</dbReference>
<dbReference type="Pfam" id="PF01979">
    <property type="entry name" value="Amidohydro_1"/>
    <property type="match status" value="1"/>
</dbReference>
<dbReference type="SUPFAM" id="SSF51338">
    <property type="entry name" value="Composite domain of metallo-dependent hydrolases"/>
    <property type="match status" value="1"/>
</dbReference>
<dbReference type="SUPFAM" id="SSF51556">
    <property type="entry name" value="Metallo-dependent hydrolases"/>
    <property type="match status" value="1"/>
</dbReference>
<gene>
    <name evidence="1" type="primary">hutI</name>
    <name type="ordered locus">RALTA_A2489</name>
</gene>
<accession>B3R6A3</accession>
<reference key="1">
    <citation type="journal article" date="2008" name="Genome Res.">
        <title>Genome sequence of the beta-rhizobium Cupriavidus taiwanensis and comparative genomics of rhizobia.</title>
        <authorList>
            <person name="Amadou C."/>
            <person name="Pascal G."/>
            <person name="Mangenot S."/>
            <person name="Glew M."/>
            <person name="Bontemps C."/>
            <person name="Capela D."/>
            <person name="Carrere S."/>
            <person name="Cruveiller S."/>
            <person name="Dossat C."/>
            <person name="Lajus A."/>
            <person name="Marchetti M."/>
            <person name="Poinsot V."/>
            <person name="Rouy Z."/>
            <person name="Servin B."/>
            <person name="Saad M."/>
            <person name="Schenowitz C."/>
            <person name="Barbe V."/>
            <person name="Batut J."/>
            <person name="Medigue C."/>
            <person name="Masson-Boivin C."/>
        </authorList>
    </citation>
    <scope>NUCLEOTIDE SEQUENCE [LARGE SCALE GENOMIC DNA]</scope>
    <source>
        <strain>DSM 17343 / BCRC 17206 / CCUG 44338 / CIP 107171 / LMG 19424 / R1</strain>
    </source>
</reference>
<proteinExistence type="inferred from homology"/>
<name>HUTI_CUPTR</name>
<sequence length="417" mass="44261">MTPNSLLSAPSADGVWHHCHLLPDADPARAIRDGALVVEHGRIAWLGAAADLPEAWRGAPRHDANGAWITPGLVDCHTHLVYGGQRADEFAMRLAGAGYEEIARAGGGIVSTVRATRGADEDTLFAQAAARLQPLLAEGVTAIEIKSGYGLNLESERKQLRVARRLGEHFGISVYTTFLGAHALPPEYADRADDYIELVCNTMLPALADEGLVDAVDAFCESIGFSIAQTERVFDAAARHGLRVKLHAEQLSNLGGAALAARHRALSADHLEHLDEAGVAAMAEAGTVAVLLPGAYYFLRDTNLPPIALLRQYGVPMAISTDHNPGTSPVTSLLLMMNMACTLFRLTVPEALAGVTAHAARALGADDRHGRLAVGRVADFALWRIDSPAELAYWFGRNPVATVVRQGRVHAGAGAAA</sequence>
<keyword id="KW-0963">Cytoplasm</keyword>
<keyword id="KW-0369">Histidine metabolism</keyword>
<keyword id="KW-0378">Hydrolase</keyword>
<keyword id="KW-0408">Iron</keyword>
<keyword id="KW-0479">Metal-binding</keyword>
<keyword id="KW-0862">Zinc</keyword>
<organism>
    <name type="scientific">Cupriavidus taiwanensis (strain DSM 17343 / BCRC 17206 / CCUG 44338 / CIP 107171 / LMG 19424 / R1)</name>
    <name type="common">Ralstonia taiwanensis (strain LMG 19424)</name>
    <dbReference type="NCBI Taxonomy" id="977880"/>
    <lineage>
        <taxon>Bacteria</taxon>
        <taxon>Pseudomonadati</taxon>
        <taxon>Pseudomonadota</taxon>
        <taxon>Betaproteobacteria</taxon>
        <taxon>Burkholderiales</taxon>
        <taxon>Burkholderiaceae</taxon>
        <taxon>Cupriavidus</taxon>
    </lineage>
</organism>
<comment type="function">
    <text evidence="1">Catalyzes the hydrolytic cleavage of the carbon-nitrogen bond in imidazolone-5-propanoate to yield N-formimidoyl-L-glutamate. It is the third step in the universal histidine degradation pathway.</text>
</comment>
<comment type="catalytic activity">
    <reaction evidence="1">
        <text>4-imidazolone-5-propanoate + H2O = N-formimidoyl-L-glutamate</text>
        <dbReference type="Rhea" id="RHEA:23660"/>
        <dbReference type="ChEBI" id="CHEBI:15377"/>
        <dbReference type="ChEBI" id="CHEBI:58928"/>
        <dbReference type="ChEBI" id="CHEBI:77893"/>
        <dbReference type="EC" id="3.5.2.7"/>
    </reaction>
</comment>
<comment type="cofactor">
    <cofactor evidence="1">
        <name>Zn(2+)</name>
        <dbReference type="ChEBI" id="CHEBI:29105"/>
    </cofactor>
    <cofactor evidence="1">
        <name>Fe(3+)</name>
        <dbReference type="ChEBI" id="CHEBI:29034"/>
    </cofactor>
    <text evidence="1">Binds 1 zinc or iron ion per subunit.</text>
</comment>
<comment type="pathway">
    <text evidence="1">Amino-acid degradation; L-histidine degradation into L-glutamate; N-formimidoyl-L-glutamate from L-histidine: step 3/3.</text>
</comment>
<comment type="subcellular location">
    <subcellularLocation>
        <location evidence="1">Cytoplasm</location>
    </subcellularLocation>
</comment>
<comment type="similarity">
    <text evidence="1">Belongs to the metallo-dependent hydrolases superfamily. HutI family.</text>
</comment>
<protein>
    <recommendedName>
        <fullName evidence="1">Imidazolonepropionase</fullName>
        <ecNumber evidence="1">3.5.2.7</ecNumber>
    </recommendedName>
    <alternativeName>
        <fullName evidence="1">Imidazolone-5-propionate hydrolase</fullName>
    </alternativeName>
</protein>
<evidence type="ECO:0000255" key="1">
    <source>
        <dbReference type="HAMAP-Rule" id="MF_00372"/>
    </source>
</evidence>
<feature type="chain" id="PRO_1000121541" description="Imidazolonepropionase">
    <location>
        <begin position="1"/>
        <end position="417"/>
    </location>
</feature>
<feature type="binding site" evidence="1">
    <location>
        <position position="77"/>
    </location>
    <ligand>
        <name>Fe(3+)</name>
        <dbReference type="ChEBI" id="CHEBI:29034"/>
    </ligand>
</feature>
<feature type="binding site" evidence="1">
    <location>
        <position position="77"/>
    </location>
    <ligand>
        <name>Zn(2+)</name>
        <dbReference type="ChEBI" id="CHEBI:29105"/>
    </ligand>
</feature>
<feature type="binding site" evidence="1">
    <location>
        <position position="79"/>
    </location>
    <ligand>
        <name>Fe(3+)</name>
        <dbReference type="ChEBI" id="CHEBI:29034"/>
    </ligand>
</feature>
<feature type="binding site" evidence="1">
    <location>
        <position position="79"/>
    </location>
    <ligand>
        <name>Zn(2+)</name>
        <dbReference type="ChEBI" id="CHEBI:29105"/>
    </ligand>
</feature>
<feature type="binding site" evidence="1">
    <location>
        <position position="86"/>
    </location>
    <ligand>
        <name>4-imidazolone-5-propanoate</name>
        <dbReference type="ChEBI" id="CHEBI:77893"/>
    </ligand>
</feature>
<feature type="binding site" evidence="1">
    <location>
        <position position="149"/>
    </location>
    <ligand>
        <name>4-imidazolone-5-propanoate</name>
        <dbReference type="ChEBI" id="CHEBI:77893"/>
    </ligand>
</feature>
<feature type="binding site" evidence="1">
    <location>
        <position position="149"/>
    </location>
    <ligand>
        <name>N-formimidoyl-L-glutamate</name>
        <dbReference type="ChEBI" id="CHEBI:58928"/>
    </ligand>
</feature>
<feature type="binding site" evidence="1">
    <location>
        <position position="182"/>
    </location>
    <ligand>
        <name>4-imidazolone-5-propanoate</name>
        <dbReference type="ChEBI" id="CHEBI:77893"/>
    </ligand>
</feature>
<feature type="binding site" evidence="1">
    <location>
        <position position="247"/>
    </location>
    <ligand>
        <name>Fe(3+)</name>
        <dbReference type="ChEBI" id="CHEBI:29034"/>
    </ligand>
</feature>
<feature type="binding site" evidence="1">
    <location>
        <position position="247"/>
    </location>
    <ligand>
        <name>Zn(2+)</name>
        <dbReference type="ChEBI" id="CHEBI:29105"/>
    </ligand>
</feature>
<feature type="binding site" evidence="1">
    <location>
        <position position="250"/>
    </location>
    <ligand>
        <name>4-imidazolone-5-propanoate</name>
        <dbReference type="ChEBI" id="CHEBI:77893"/>
    </ligand>
</feature>
<feature type="binding site" evidence="1">
    <location>
        <position position="322"/>
    </location>
    <ligand>
        <name>Fe(3+)</name>
        <dbReference type="ChEBI" id="CHEBI:29034"/>
    </ligand>
</feature>
<feature type="binding site" evidence="1">
    <location>
        <position position="322"/>
    </location>
    <ligand>
        <name>Zn(2+)</name>
        <dbReference type="ChEBI" id="CHEBI:29105"/>
    </ligand>
</feature>
<feature type="binding site" evidence="1">
    <location>
        <position position="324"/>
    </location>
    <ligand>
        <name>N-formimidoyl-L-glutamate</name>
        <dbReference type="ChEBI" id="CHEBI:58928"/>
    </ligand>
</feature>
<feature type="binding site" evidence="1">
    <location>
        <position position="326"/>
    </location>
    <ligand>
        <name>N-formimidoyl-L-glutamate</name>
        <dbReference type="ChEBI" id="CHEBI:58928"/>
    </ligand>
</feature>
<feature type="binding site" evidence="1">
    <location>
        <position position="327"/>
    </location>
    <ligand>
        <name>4-imidazolone-5-propanoate</name>
        <dbReference type="ChEBI" id="CHEBI:77893"/>
    </ligand>
</feature>